<organism>
    <name type="scientific">Burkholderia orbicola (strain MC0-3)</name>
    <dbReference type="NCBI Taxonomy" id="406425"/>
    <lineage>
        <taxon>Bacteria</taxon>
        <taxon>Pseudomonadati</taxon>
        <taxon>Pseudomonadota</taxon>
        <taxon>Betaproteobacteria</taxon>
        <taxon>Burkholderiales</taxon>
        <taxon>Burkholderiaceae</taxon>
        <taxon>Burkholderia</taxon>
        <taxon>Burkholderia cepacia complex</taxon>
        <taxon>Burkholderia orbicola</taxon>
    </lineage>
</organism>
<accession>B1K1H7</accession>
<dbReference type="EC" id="2.1.1.61" evidence="1"/>
<dbReference type="EC" id="1.5.-.-" evidence="1"/>
<dbReference type="EMBL" id="CP000958">
    <property type="protein sequence ID" value="ACA89265.1"/>
    <property type="molecule type" value="Genomic_DNA"/>
</dbReference>
<dbReference type="RefSeq" id="WP_012327589.1">
    <property type="nucleotide sequence ID" value="NC_010508.1"/>
</dbReference>
<dbReference type="SMR" id="B1K1H7"/>
<dbReference type="GeneID" id="83046884"/>
<dbReference type="KEGG" id="bcm:Bcenmc03_0085"/>
<dbReference type="HOGENOM" id="CLU_022427_1_0_4"/>
<dbReference type="Proteomes" id="UP000002169">
    <property type="component" value="Chromosome 1"/>
</dbReference>
<dbReference type="GO" id="GO:0005737">
    <property type="term" value="C:cytoplasm"/>
    <property type="evidence" value="ECO:0007669"/>
    <property type="project" value="UniProtKB-SubCell"/>
</dbReference>
<dbReference type="GO" id="GO:0050660">
    <property type="term" value="F:flavin adenine dinucleotide binding"/>
    <property type="evidence" value="ECO:0007669"/>
    <property type="project" value="UniProtKB-UniRule"/>
</dbReference>
<dbReference type="GO" id="GO:0016645">
    <property type="term" value="F:oxidoreductase activity, acting on the CH-NH group of donors"/>
    <property type="evidence" value="ECO:0007669"/>
    <property type="project" value="InterPro"/>
</dbReference>
<dbReference type="GO" id="GO:0004808">
    <property type="term" value="F:tRNA (5-methylaminomethyl-2-thiouridylate)(34)-methyltransferase activity"/>
    <property type="evidence" value="ECO:0007669"/>
    <property type="project" value="UniProtKB-EC"/>
</dbReference>
<dbReference type="GO" id="GO:0032259">
    <property type="term" value="P:methylation"/>
    <property type="evidence" value="ECO:0007669"/>
    <property type="project" value="UniProtKB-KW"/>
</dbReference>
<dbReference type="GO" id="GO:0002097">
    <property type="term" value="P:tRNA wobble base modification"/>
    <property type="evidence" value="ECO:0007669"/>
    <property type="project" value="UniProtKB-UniRule"/>
</dbReference>
<dbReference type="Gene3D" id="3.30.9.10">
    <property type="entry name" value="D-Amino Acid Oxidase, subunit A, domain 2"/>
    <property type="match status" value="1"/>
</dbReference>
<dbReference type="Gene3D" id="3.50.50.60">
    <property type="entry name" value="FAD/NAD(P)-binding domain"/>
    <property type="match status" value="1"/>
</dbReference>
<dbReference type="Gene3D" id="3.40.50.150">
    <property type="entry name" value="Vaccinia Virus protein VP39"/>
    <property type="match status" value="1"/>
</dbReference>
<dbReference type="HAMAP" id="MF_01102">
    <property type="entry name" value="MnmC"/>
    <property type="match status" value="1"/>
</dbReference>
<dbReference type="InterPro" id="IPR006076">
    <property type="entry name" value="FAD-dep_OxRdtase"/>
</dbReference>
<dbReference type="InterPro" id="IPR036188">
    <property type="entry name" value="FAD/NAD-bd_sf"/>
</dbReference>
<dbReference type="InterPro" id="IPR008471">
    <property type="entry name" value="MnmC-like_methylTransf"/>
</dbReference>
<dbReference type="InterPro" id="IPR029063">
    <property type="entry name" value="SAM-dependent_MTases_sf"/>
</dbReference>
<dbReference type="InterPro" id="IPR023032">
    <property type="entry name" value="tRNA_MAMT_biosynth_bifunc_MnmC"/>
</dbReference>
<dbReference type="InterPro" id="IPR017610">
    <property type="entry name" value="tRNA_S-uridine_synth_MnmC_C"/>
</dbReference>
<dbReference type="NCBIfam" id="TIGR03197">
    <property type="entry name" value="MnmC_Cterm"/>
    <property type="match status" value="1"/>
</dbReference>
<dbReference type="NCBIfam" id="NF002483">
    <property type="entry name" value="PRK01747.1-4"/>
    <property type="match status" value="1"/>
</dbReference>
<dbReference type="PANTHER" id="PTHR13847">
    <property type="entry name" value="SARCOSINE DEHYDROGENASE-RELATED"/>
    <property type="match status" value="1"/>
</dbReference>
<dbReference type="PANTHER" id="PTHR13847:SF283">
    <property type="entry name" value="TRNA 5-METHYLAMINOMETHYL-2-THIOURIDINE BIOSYNTHESIS BIFUNCTIONAL PROTEIN MNMC"/>
    <property type="match status" value="1"/>
</dbReference>
<dbReference type="Pfam" id="PF01266">
    <property type="entry name" value="DAO"/>
    <property type="match status" value="1"/>
</dbReference>
<dbReference type="Pfam" id="PF05430">
    <property type="entry name" value="Methyltransf_30"/>
    <property type="match status" value="1"/>
</dbReference>
<dbReference type="SUPFAM" id="SSF54373">
    <property type="entry name" value="FAD-linked reductases, C-terminal domain"/>
    <property type="match status" value="1"/>
</dbReference>
<dbReference type="SUPFAM" id="SSF51905">
    <property type="entry name" value="FAD/NAD(P)-binding domain"/>
    <property type="match status" value="1"/>
</dbReference>
<reference key="1">
    <citation type="submission" date="2008-02" db="EMBL/GenBank/DDBJ databases">
        <title>Complete sequence of chromosome 1 of Burkholderia cenocepacia MC0-3.</title>
        <authorList>
            <person name="Copeland A."/>
            <person name="Lucas S."/>
            <person name="Lapidus A."/>
            <person name="Barry K."/>
            <person name="Bruce D."/>
            <person name="Goodwin L."/>
            <person name="Glavina del Rio T."/>
            <person name="Dalin E."/>
            <person name="Tice H."/>
            <person name="Pitluck S."/>
            <person name="Chain P."/>
            <person name="Malfatti S."/>
            <person name="Shin M."/>
            <person name="Vergez L."/>
            <person name="Schmutz J."/>
            <person name="Larimer F."/>
            <person name="Land M."/>
            <person name="Hauser L."/>
            <person name="Kyrpides N."/>
            <person name="Mikhailova N."/>
            <person name="Tiedje J."/>
            <person name="Richardson P."/>
        </authorList>
    </citation>
    <scope>NUCLEOTIDE SEQUENCE [LARGE SCALE GENOMIC DNA]</scope>
    <source>
        <strain>MC0-3</strain>
    </source>
</reference>
<keyword id="KW-0963">Cytoplasm</keyword>
<keyword id="KW-0274">FAD</keyword>
<keyword id="KW-0285">Flavoprotein</keyword>
<keyword id="KW-0489">Methyltransferase</keyword>
<keyword id="KW-0511">Multifunctional enzyme</keyword>
<keyword id="KW-0560">Oxidoreductase</keyword>
<keyword id="KW-0949">S-adenosyl-L-methionine</keyword>
<keyword id="KW-0808">Transferase</keyword>
<keyword id="KW-0819">tRNA processing</keyword>
<name>MNMC_BURO0</name>
<feature type="chain" id="PRO_0000347951" description="tRNA 5-methylaminomethyl-2-thiouridine biosynthesis bifunctional protein MnmC">
    <location>
        <begin position="1"/>
        <end position="643"/>
    </location>
</feature>
<feature type="region of interest" description="tRNA (mnm(5)s(2)U34)-methyltransferase">
    <location>
        <begin position="1"/>
        <end position="223"/>
    </location>
</feature>
<feature type="region of interest" description="FAD-dependent cmnm(5)s(2)U34 oxidoreductase">
    <location>
        <begin position="247"/>
        <end position="643"/>
    </location>
</feature>
<protein>
    <recommendedName>
        <fullName evidence="1">tRNA 5-methylaminomethyl-2-thiouridine biosynthesis bifunctional protein MnmC</fullName>
        <shortName evidence="1">tRNA mnm(5)s(2)U biosynthesis bifunctional protein</shortName>
    </recommendedName>
    <domain>
        <recommendedName>
            <fullName evidence="1">tRNA (mnm(5)s(2)U34)-methyltransferase</fullName>
            <ecNumber evidence="1">2.1.1.61</ecNumber>
        </recommendedName>
    </domain>
    <domain>
        <recommendedName>
            <fullName evidence="1">FAD-dependent cmnm(5)s(2)U34 oxidoreductase</fullName>
            <ecNumber evidence="1">1.5.-.-</ecNumber>
        </recommendedName>
    </domain>
</protein>
<comment type="function">
    <text evidence="1">Catalyzes the last two steps in the biosynthesis of 5-methylaminomethyl-2-thiouridine (mnm(5)s(2)U) at the wobble position (U34) in tRNA. Catalyzes the FAD-dependent demodification of cmnm(5)s(2)U34 to nm(5)s(2)U34, followed by the transfer of a methyl group from S-adenosyl-L-methionine to nm(5)s(2)U34, to form mnm(5)s(2)U34.</text>
</comment>
<comment type="catalytic activity">
    <reaction evidence="1">
        <text>5-aminomethyl-2-thiouridine(34) in tRNA + S-adenosyl-L-methionine = 5-methylaminomethyl-2-thiouridine(34) in tRNA + S-adenosyl-L-homocysteine + H(+)</text>
        <dbReference type="Rhea" id="RHEA:19569"/>
        <dbReference type="Rhea" id="RHEA-COMP:10195"/>
        <dbReference type="Rhea" id="RHEA-COMP:10197"/>
        <dbReference type="ChEBI" id="CHEBI:15378"/>
        <dbReference type="ChEBI" id="CHEBI:57856"/>
        <dbReference type="ChEBI" id="CHEBI:59789"/>
        <dbReference type="ChEBI" id="CHEBI:74454"/>
        <dbReference type="ChEBI" id="CHEBI:74455"/>
        <dbReference type="EC" id="2.1.1.61"/>
    </reaction>
</comment>
<comment type="cofactor">
    <cofactor evidence="1">
        <name>FAD</name>
        <dbReference type="ChEBI" id="CHEBI:57692"/>
    </cofactor>
</comment>
<comment type="subcellular location">
    <subcellularLocation>
        <location evidence="1">Cytoplasm</location>
    </subcellularLocation>
</comment>
<comment type="similarity">
    <text evidence="1">In the N-terminal section; belongs to the methyltransferase superfamily. tRNA (mnm(5)s(2)U34)-methyltransferase family.</text>
</comment>
<comment type="similarity">
    <text evidence="1">In the C-terminal section; belongs to the DAO family.</text>
</comment>
<gene>
    <name evidence="1" type="primary">mnmC</name>
    <name type="ordered locus">Bcenmc03_0085</name>
</gene>
<proteinExistence type="inferred from homology"/>
<sequence length="643" mass="68624">MPDRLVSATLALRDDGTLVSPEFGELHRGASGTLARAHRTFVAGNGLPARWQRRRTFTIVTTAFGAGAGFLAAWAAWRDDPARCERLHVVAVEPHPFSRDDLHRAVSHMVADTTISADVDALLDAWPMRVPGLHRLEFDAGRVVLTLAFGDTIDLLKKLVARADAFFLDGAAASSDGIRALAKLAGEHATFATHAKSDDVKHALGETGFTFREVDDRLVGDYAPRWRARRHEPPRALPVTTRRAIVIGAGLAGCAVVERLAARGWDVTLIERHERIASEASGNPAGVFHPLMTRDDNVASRLTRGGFLHALARWRALERAGHAFSRSTHGMLHLAESADDFARMRDAFDAFGAPSDYATLLDADAARAHLNLPVAQGGLLFPHGGAVWPAGLCAAQYAAAGERVRLLASTCVARLERRDDTWHALDDTGATLADAPVVVLANAGDAARLAGLRHVALQPVRGQLTLLPPGTTAPLPCPAIGDGYAVPLDDGTLLIGATFEPDDTDPAMRAAGHAENLDRVRHLLPGLIGALPDPATLRGRVAFRWVVGDRLPLIGPLADETQATANARALGGAQARDLPRMPGLYGAFGFGSRGLVWAALGAELIASQLEGEPWPLERELADAVDPARFLIRALRARRVGSAG</sequence>
<evidence type="ECO:0000255" key="1">
    <source>
        <dbReference type="HAMAP-Rule" id="MF_01102"/>
    </source>
</evidence>